<reference key="1">
    <citation type="journal article" date="1989" name="Proc. Natl. Acad. Sci. U.S.A.">
        <title>Isolation of a cDNA encoding a murine UDPgalactose:beta-D-galactosyl-1,4-N-acetyl-D-glucosaminide alpha-1,3-galactosyltransferase: expression cloning by gene transfer.</title>
        <authorList>
            <person name="Larsen R.D."/>
            <person name="Rajan V.P."/>
            <person name="Ruff M.M."/>
            <person name="Kukowska-Latallo J."/>
            <person name="Cummings R.D."/>
            <person name="Lowe J.B."/>
        </authorList>
    </citation>
    <scope>NUCLEOTIDE SEQUENCE [MRNA]</scope>
</reference>
<reference key="2">
    <citation type="journal article" date="1992" name="J. Biol. Chem.">
        <title>Murine alpha 1,3-galactosyltransferase. A single gene locus specifies four isoforms of the enzyme by alternative splicing.</title>
        <authorList>
            <person name="Joziasse D.H."/>
            <person name="Shaper N.L."/>
            <person name="Kim D."/>
            <person name="van den Eijnden D.H."/>
            <person name="Shaper J.H."/>
        </authorList>
    </citation>
    <scope>NUCLEOTIDE SEQUENCE [MRNA]</scope>
    <scope>ALTERNATIVE SPLICING</scope>
</reference>
<reference key="3">
    <citation type="journal article" date="2001" name="Transplant. Proc.">
        <title>Comparison of the regulatory regions of the alpha1,3galactosyltransferase gene between murine and porcine species.</title>
        <authorList>
            <person name="Koike C."/>
            <person name="Friday R."/>
            <person name="Fung J.J."/>
            <person name="Starzl T.E."/>
            <person name="Trucco M."/>
        </authorList>
    </citation>
    <scope>NUCLEOTIDE SEQUENCE [GENOMIC DNA / MRNA] (ISOFORM 3)</scope>
    <source>
        <strain>BALB/cJ</strain>
    </source>
</reference>
<reference key="4">
    <citation type="journal article" date="2003" name="Glycobiology">
        <title>Characterization of the rat alpha(1,3)galactosyltransferase: evidence for two independent genes encoding glycosyltransferases that synthesize Galalpha(1,3)Gal by two separate glycosylation pathways.</title>
        <authorList>
            <person name="Taylor S.G."/>
            <person name="McKenzie I.F."/>
            <person name="Sandrin M.S."/>
        </authorList>
    </citation>
    <scope>FUNCTION</scope>
</reference>
<sequence>MITMLQDLHVNKISMSRSKSETSLPSSRSGSQEKIMNVKGKVILLMLIVSTVVVVFWEYVNRIPEVGENRWQKDWWFPSWFKNGTHSYQEDNVEGRREKGRNGDRIEEPQLWDWFNPKNRPDVLTVTPWKAPIVWEGTYDTALLEKYYATQKLTVGLTVFAVGKYIEHYLEDFLESADMYFMVGHRVIFYVMIDDTSRMPVVHLNPLHSLQVFEIRSEKRWQDISMMRMKTIGEHILAHIQHEVDFLFCMDVDQVFQDNFGVETLGQLVAQLQAWWYKASPEKFTYERRELSAAYIPFGEGDFYYHAAIFGGTPTHILNLTRECFKGILQDKKHDIEAQWHDESHLNKYFLFNKPTKILSPEYCWDYQIGLPSDIKSVKVAWQTKEYNLVRNNV</sequence>
<gene>
    <name type="primary">Ggta1</name>
    <name type="synonym">Ggta-1</name>
</gene>
<evidence type="ECO:0000250" key="1">
    <source>
        <dbReference type="UniProtKB" id="P14769"/>
    </source>
</evidence>
<evidence type="ECO:0000255" key="2"/>
<evidence type="ECO:0000269" key="3">
    <source>
    </source>
</evidence>
<evidence type="ECO:0000303" key="4">
    <source>
    </source>
</evidence>
<evidence type="ECO:0000305" key="5"/>
<comment type="function">
    <text evidence="3">Synthesizes the galactose-alpha(1,3)-galactose group by catalyzing the transfer of a galactose residue, with an alpha-1,3 linkage, on terminal lactosaminide (Gal-beta-1,4-GlcNAc-R) disaccharide borne by a glycoprotein or a glycolipid. Preferentially glycosylates proteins, can synthesize galactose-alpha(1,3)-galactose on glycoproteins but cannot synthesize the glycolipid called isoglobotrihexosylceramide or isogloboside 3 (iGb3).</text>
</comment>
<comment type="catalytic activity">
    <reaction evidence="1">
        <text>a beta-D-galactosyl-(1-&gt;4)-N-acetyl-beta-D-glucosaminyl derivative + UDP-alpha-D-galactose = an alpha-D-galactosyl-(1-&gt;3)-beta-D-galactosyl-(1-&gt;4)-N-acetyl-beta-D-glucosaminyl derivative + UDP + H(+)</text>
        <dbReference type="Rhea" id="RHEA:13013"/>
        <dbReference type="ChEBI" id="CHEBI:15378"/>
        <dbReference type="ChEBI" id="CHEBI:58223"/>
        <dbReference type="ChEBI" id="CHEBI:66914"/>
        <dbReference type="ChEBI" id="CHEBI:133507"/>
        <dbReference type="ChEBI" id="CHEBI:138024"/>
        <dbReference type="EC" id="2.4.1.87"/>
    </reaction>
</comment>
<comment type="cofactor">
    <cofactor evidence="1">
        <name>Mn(2+)</name>
        <dbReference type="ChEBI" id="CHEBI:29035"/>
    </cofactor>
    <text evidence="1">Binds 1 Mn(2+) ion per subunit.</text>
</comment>
<comment type="pathway">
    <text evidence="1">Protein modification; protein glycosylation.</text>
</comment>
<comment type="subcellular location">
    <subcellularLocation>
        <location>Golgi apparatus</location>
        <location>Golgi stack membrane</location>
        <topology>Single-pass type II membrane protein</topology>
    </subcellularLocation>
    <text>Membrane-bound form in trans cisternae of Golgi.</text>
</comment>
<comment type="alternative products">
    <event type="alternative splicing"/>
    <isoform>
        <id>P23336-1</id>
        <name>1</name>
        <sequence type="displayed"/>
    </isoform>
    <isoform>
        <id>P23336-2</id>
        <name>2</name>
        <sequence type="described" ref="VSP_001804"/>
    </isoform>
    <isoform>
        <id>P23336-3</id>
        <name>3</name>
        <sequence type="described" ref="VSP_001804 VSP_001805"/>
    </isoform>
</comment>
<comment type="domain">
    <text>The conserved DXD motif is involved in cofactor binding. The manganese ion interacts with the beta-phosphate group of UDP and may also have a role in catalysis.</text>
</comment>
<comment type="similarity">
    <text evidence="5">Belongs to the glycosyltransferase 6 family.</text>
</comment>
<name>GGTA1_MOUSE</name>
<dbReference type="EC" id="2.4.1.87" evidence="1"/>
<dbReference type="EMBL" id="M26925">
    <property type="protein sequence ID" value="AAA37657.1"/>
    <property type="molecule type" value="mRNA"/>
</dbReference>
<dbReference type="EMBL" id="M85153">
    <property type="protein sequence ID" value="AAA37711.1"/>
    <property type="molecule type" value="mRNA"/>
</dbReference>
<dbReference type="EMBL" id="AF297614">
    <property type="protein sequence ID" value="AAK97205.1"/>
    <property type="molecule type" value="Genomic_DNA"/>
</dbReference>
<dbReference type="EMBL" id="AF297609">
    <property type="protein sequence ID" value="AAK97205.1"/>
    <property type="status" value="JOINED"/>
    <property type="molecule type" value="Genomic_DNA"/>
</dbReference>
<dbReference type="EMBL" id="AF297610">
    <property type="protein sequence ID" value="AAK97205.1"/>
    <property type="status" value="JOINED"/>
    <property type="molecule type" value="Genomic_DNA"/>
</dbReference>
<dbReference type="EMBL" id="AF297611">
    <property type="protein sequence ID" value="AAK97205.1"/>
    <property type="status" value="JOINED"/>
    <property type="molecule type" value="Genomic_DNA"/>
</dbReference>
<dbReference type="EMBL" id="AF297612">
    <property type="protein sequence ID" value="AAK97205.1"/>
    <property type="status" value="JOINED"/>
    <property type="molecule type" value="Genomic_DNA"/>
</dbReference>
<dbReference type="EMBL" id="AF297613">
    <property type="protein sequence ID" value="AAK97205.1"/>
    <property type="status" value="JOINED"/>
    <property type="molecule type" value="Genomic_DNA"/>
</dbReference>
<dbReference type="EMBL" id="AF297615">
    <property type="protein sequence ID" value="AAK97206.1"/>
    <property type="molecule type" value="mRNA"/>
</dbReference>
<dbReference type="CCDS" id="CCDS50576.1">
    <molecule id="P23336-1"/>
</dbReference>
<dbReference type="PIR" id="A34417">
    <property type="entry name" value="A34417"/>
</dbReference>
<dbReference type="PIR" id="I49698">
    <property type="entry name" value="I49698"/>
</dbReference>
<dbReference type="RefSeq" id="NP_001139293.1">
    <molecule id="P23336-1"/>
    <property type="nucleotide sequence ID" value="NM_001145821.3"/>
</dbReference>
<dbReference type="RefSeq" id="NP_001407196.1">
    <molecule id="P23336-1"/>
    <property type="nucleotide sequence ID" value="NM_001420267.1"/>
</dbReference>
<dbReference type="SMR" id="P23336"/>
<dbReference type="BioGRID" id="199911">
    <property type="interactions" value="1"/>
</dbReference>
<dbReference type="FunCoup" id="P23336">
    <property type="interactions" value="103"/>
</dbReference>
<dbReference type="STRING" id="10090.ENSMUSP00000099858"/>
<dbReference type="BindingDB" id="P23336"/>
<dbReference type="ChEMBL" id="CHEMBL2479"/>
<dbReference type="CAZy" id="GT6">
    <property type="family name" value="Glycosyltransferase Family 6"/>
</dbReference>
<dbReference type="GlyCosmos" id="P23336">
    <property type="glycosylation" value="2 sites, No reported glycans"/>
</dbReference>
<dbReference type="GlyGen" id="P23336">
    <property type="glycosylation" value="3 sites, 1 N-linked glycan (1 site)"/>
</dbReference>
<dbReference type="iPTMnet" id="P23336"/>
<dbReference type="PhosphoSitePlus" id="P23336"/>
<dbReference type="PaxDb" id="10090-ENSMUSP00000099858"/>
<dbReference type="PeptideAtlas" id="P23336"/>
<dbReference type="ProteomicsDB" id="271215">
    <molecule id="P23336-1"/>
</dbReference>
<dbReference type="ProteomicsDB" id="271216">
    <molecule id="P23336-2"/>
</dbReference>
<dbReference type="ProteomicsDB" id="271217">
    <molecule id="P23336-3"/>
</dbReference>
<dbReference type="DNASU" id="14594"/>
<dbReference type="Ensembl" id="ENSMUST00000113002.9">
    <molecule id="P23336-1"/>
    <property type="protein sequence ID" value="ENSMUSP00000108626.3"/>
    <property type="gene ID" value="ENSMUSG00000035778.18"/>
</dbReference>
<dbReference type="Ensembl" id="ENSMUST00000164889.8">
    <molecule id="P23336-1"/>
    <property type="protein sequence ID" value="ENSMUSP00000132408.2"/>
    <property type="gene ID" value="ENSMUSG00000035778.18"/>
</dbReference>
<dbReference type="GeneID" id="14594"/>
<dbReference type="KEGG" id="mmu:14594"/>
<dbReference type="UCSC" id="uc008jkm.2">
    <molecule id="P23336-1"/>
    <property type="organism name" value="mouse"/>
</dbReference>
<dbReference type="AGR" id="MGI:95704"/>
<dbReference type="CTD" id="2681"/>
<dbReference type="MGI" id="MGI:95704">
    <property type="gene designation" value="Ggta1"/>
</dbReference>
<dbReference type="VEuPathDB" id="HostDB:ENSMUSG00000035778"/>
<dbReference type="eggNOG" id="ENOG502QW2H">
    <property type="taxonomic scope" value="Eukaryota"/>
</dbReference>
<dbReference type="GeneTree" id="ENSGT00950000182858"/>
<dbReference type="InParanoid" id="P23336"/>
<dbReference type="OrthoDB" id="10013941at2759"/>
<dbReference type="BRENDA" id="2.4.1.87">
    <property type="organism ID" value="3474"/>
</dbReference>
<dbReference type="UniPathway" id="UPA00378"/>
<dbReference type="BioGRID-ORCS" id="14594">
    <property type="hits" value="0 hits in 78 CRISPR screens"/>
</dbReference>
<dbReference type="ChiTaRS" id="Ggta1">
    <property type="organism name" value="mouse"/>
</dbReference>
<dbReference type="PRO" id="PR:P23336"/>
<dbReference type="Proteomes" id="UP000000589">
    <property type="component" value="Chromosome 2"/>
</dbReference>
<dbReference type="RNAct" id="P23336">
    <property type="molecule type" value="protein"/>
</dbReference>
<dbReference type="Bgee" id="ENSMUSG00000035778">
    <property type="expression patterns" value="Expressed in decidua and 225 other cell types or tissues"/>
</dbReference>
<dbReference type="ExpressionAtlas" id="P23336">
    <property type="expression patterns" value="baseline and differential"/>
</dbReference>
<dbReference type="GO" id="GO:0031985">
    <property type="term" value="C:Golgi cisterna"/>
    <property type="evidence" value="ECO:0000250"/>
    <property type="project" value="UniProtKB"/>
</dbReference>
<dbReference type="GO" id="GO:0032580">
    <property type="term" value="C:Golgi cisterna membrane"/>
    <property type="evidence" value="ECO:0007669"/>
    <property type="project" value="UniProtKB-SubCell"/>
</dbReference>
<dbReference type="GO" id="GO:0046872">
    <property type="term" value="F:metal ion binding"/>
    <property type="evidence" value="ECO:0007669"/>
    <property type="project" value="UniProtKB-KW"/>
</dbReference>
<dbReference type="GO" id="GO:0047276">
    <property type="term" value="F:N-acetyllactosaminide 3-alpha-galactosyltransferase activity"/>
    <property type="evidence" value="ECO:0007669"/>
    <property type="project" value="UniProtKB-EC"/>
</dbReference>
<dbReference type="GO" id="GO:0005975">
    <property type="term" value="P:carbohydrate metabolic process"/>
    <property type="evidence" value="ECO:0007669"/>
    <property type="project" value="InterPro"/>
</dbReference>
<dbReference type="GO" id="GO:0006486">
    <property type="term" value="P:protein glycosylation"/>
    <property type="evidence" value="ECO:0007669"/>
    <property type="project" value="UniProtKB-UniPathway"/>
</dbReference>
<dbReference type="CDD" id="cd02515">
    <property type="entry name" value="Glyco_transf_6"/>
    <property type="match status" value="1"/>
</dbReference>
<dbReference type="FunFam" id="3.90.550.10:FF:000022">
    <property type="entry name" value="Histo-blood group ABO system transferase"/>
    <property type="match status" value="1"/>
</dbReference>
<dbReference type="Gene3D" id="3.90.550.10">
    <property type="entry name" value="Spore Coat Polysaccharide Biosynthesis Protein SpsA, Chain A"/>
    <property type="match status" value="1"/>
</dbReference>
<dbReference type="InterPro" id="IPR005076">
    <property type="entry name" value="Glyco_trans_6"/>
</dbReference>
<dbReference type="InterPro" id="IPR029044">
    <property type="entry name" value="Nucleotide-diphossugar_trans"/>
</dbReference>
<dbReference type="PANTHER" id="PTHR10462">
    <property type="entry name" value="GLYCOSYLTRANSFERASE-RELATED"/>
    <property type="match status" value="1"/>
</dbReference>
<dbReference type="PANTHER" id="PTHR10462:SF26">
    <property type="entry name" value="N-ACETYLLACTOSAMINIDE ALPHA-1,3-GALACTOSYLTRANSFERASE"/>
    <property type="match status" value="1"/>
</dbReference>
<dbReference type="Pfam" id="PF03414">
    <property type="entry name" value="Glyco_transf_6"/>
    <property type="match status" value="1"/>
</dbReference>
<dbReference type="SUPFAM" id="SSF53448">
    <property type="entry name" value="Nucleotide-diphospho-sugar transferases"/>
    <property type="match status" value="1"/>
</dbReference>
<organism>
    <name type="scientific">Mus musculus</name>
    <name type="common">Mouse</name>
    <dbReference type="NCBI Taxonomy" id="10090"/>
    <lineage>
        <taxon>Eukaryota</taxon>
        <taxon>Metazoa</taxon>
        <taxon>Chordata</taxon>
        <taxon>Craniata</taxon>
        <taxon>Vertebrata</taxon>
        <taxon>Euteleostomi</taxon>
        <taxon>Mammalia</taxon>
        <taxon>Eutheria</taxon>
        <taxon>Euarchontoglires</taxon>
        <taxon>Glires</taxon>
        <taxon>Rodentia</taxon>
        <taxon>Myomorpha</taxon>
        <taxon>Muroidea</taxon>
        <taxon>Muridae</taxon>
        <taxon>Murinae</taxon>
        <taxon>Mus</taxon>
        <taxon>Mus</taxon>
    </lineage>
</organism>
<keyword id="KW-0025">Alternative splicing</keyword>
<keyword id="KW-0325">Glycoprotein</keyword>
<keyword id="KW-0328">Glycosyltransferase</keyword>
<keyword id="KW-0333">Golgi apparatus</keyword>
<keyword id="KW-0464">Manganese</keyword>
<keyword id="KW-0472">Membrane</keyword>
<keyword id="KW-0479">Metal-binding</keyword>
<keyword id="KW-1185">Reference proteome</keyword>
<keyword id="KW-0735">Signal-anchor</keyword>
<keyword id="KW-0808">Transferase</keyword>
<keyword id="KW-0812">Transmembrane</keyword>
<keyword id="KW-1133">Transmembrane helix</keyword>
<proteinExistence type="evidence at transcript level"/>
<protein>
    <recommendedName>
        <fullName>N-acetyllactosaminide alpha-1,3-galactosyltransferase</fullName>
        <ecNumber evidence="1">2.4.1.87</ecNumber>
    </recommendedName>
    <alternativeName>
        <fullName>UDP-galactose:beta-D-galactosyl-1,4-N-acetyl-D-glucosaminide alpha-1,3-galactosyltransferase</fullName>
        <shortName>Galactosyltransferase</shortName>
    </alternativeName>
</protein>
<feature type="chain" id="PRO_0000157299" description="N-acetyllactosaminide alpha-1,3-galactosyltransferase">
    <location>
        <begin position="1"/>
        <end position="394"/>
    </location>
</feature>
<feature type="topological domain" description="Cytoplasmic" evidence="2">
    <location>
        <begin position="1"/>
        <end position="41"/>
    </location>
</feature>
<feature type="transmembrane region" description="Helical; Signal-anchor for type II membrane protein" evidence="2">
    <location>
        <begin position="42"/>
        <end position="60"/>
    </location>
</feature>
<feature type="topological domain" description="Lumenal" evidence="2">
    <location>
        <begin position="61"/>
        <end position="394"/>
    </location>
</feature>
<feature type="active site" description="Nucleophile" evidence="1">
    <location>
        <position position="343"/>
    </location>
</feature>
<feature type="binding site" evidence="1">
    <location>
        <begin position="160"/>
        <end position="165"/>
    </location>
    <ligand>
        <name>substrate</name>
    </ligand>
</feature>
<feature type="binding site" evidence="1">
    <location>
        <begin position="251"/>
        <end position="253"/>
    </location>
    <ligand>
        <name>substrate</name>
    </ligand>
</feature>
<feature type="binding site" evidence="1">
    <location>
        <position position="251"/>
    </location>
    <ligand>
        <name>Mn(2+)</name>
        <dbReference type="ChEBI" id="CHEBI:29035"/>
    </ligand>
</feature>
<feature type="binding site" evidence="1">
    <location>
        <position position="253"/>
    </location>
    <ligand>
        <name>Mn(2+)</name>
        <dbReference type="ChEBI" id="CHEBI:29035"/>
    </ligand>
</feature>
<feature type="binding site" evidence="1">
    <location>
        <begin position="273"/>
        <end position="276"/>
    </location>
    <ligand>
        <name>substrate</name>
    </ligand>
</feature>
<feature type="binding site" evidence="1">
    <location>
        <position position="285"/>
    </location>
    <ligand>
        <name>substrate</name>
    </ligand>
</feature>
<feature type="binding site" evidence="1">
    <location>
        <begin position="385"/>
        <end position="391"/>
    </location>
    <ligand>
        <name>substrate</name>
    </ligand>
</feature>
<feature type="glycosylation site" description="N-linked (GlcNAc...) asparagine" evidence="2">
    <location>
        <position position="83"/>
    </location>
</feature>
<feature type="glycosylation site" description="N-linked (GlcNAc...) asparagine" evidence="2">
    <location>
        <position position="319"/>
    </location>
</feature>
<feature type="splice variant" id="VSP_001804" description="In isoform 2 and isoform 3." evidence="4">
    <location>
        <begin position="1"/>
        <end position="35"/>
    </location>
</feature>
<feature type="splice variant" id="VSP_001805" description="In isoform 3." evidence="4">
    <original>R</original>
    <variation>SPDGSFLWIYHTK</variation>
    <location>
        <position position="62"/>
    </location>
</feature>
<accession>P23336</accession>
<accession>Q91V22</accession>